<evidence type="ECO:0000269" key="1">
    <source>
    </source>
</evidence>
<evidence type="ECO:0000305" key="2"/>
<accession>O97388</accession>
<keyword id="KW-0104">Cadmium</keyword>
<keyword id="KW-0903">Direct protein sequencing</keyword>
<keyword id="KW-0479">Metal-binding</keyword>
<keyword id="KW-0480">Metal-thiolate cluster</keyword>
<comment type="function">
    <text>The metallothioneins are involved in the cellular sequestration of toxic metal ions. Binds 12 cadmium ions per molecule.</text>
</comment>
<comment type="induction">
    <text>By cadmium.</text>
</comment>
<comment type="similarity">
    <text evidence="2">Belongs to the metallothionein superfamily. Type 7 family.</text>
</comment>
<dbReference type="EMBL" id="AJ005080">
    <property type="protein sequence ID" value="CAA06337.1"/>
    <property type="molecule type" value="Genomic_DNA"/>
</dbReference>
<dbReference type="GO" id="GO:0046870">
    <property type="term" value="F:cadmium ion binding"/>
    <property type="evidence" value="ECO:0007669"/>
    <property type="project" value="InterPro"/>
</dbReference>
<dbReference type="InterPro" id="IPR012484">
    <property type="entry name" value="Metalthion_7"/>
</dbReference>
<dbReference type="Pfam" id="PF07846">
    <property type="entry name" value="Metallothio_Cad"/>
    <property type="match status" value="2"/>
</dbReference>
<feature type="propeptide" id="PRO_0000018670" evidence="1">
    <location>
        <begin position="1"/>
        <end position="2"/>
    </location>
</feature>
<feature type="chain" id="PRO_0000018671" description="Metallothionein-1">
    <location>
        <begin position="3"/>
        <end position="107"/>
    </location>
</feature>
<feature type="chain" id="PRO_0000018672" description="Metallothionein-2">
    <location>
        <begin position="4"/>
        <end position="107"/>
    </location>
</feature>
<organism>
    <name type="scientific">Tetrahymena pyriformis</name>
    <dbReference type="NCBI Taxonomy" id="5908"/>
    <lineage>
        <taxon>Eukaryota</taxon>
        <taxon>Sar</taxon>
        <taxon>Alveolata</taxon>
        <taxon>Ciliophora</taxon>
        <taxon>Intramacronucleata</taxon>
        <taxon>Oligohymenophorea</taxon>
        <taxon>Hymenostomatida</taxon>
        <taxon>Tetrahymenina</taxon>
        <taxon>Tetrahymenidae</taxon>
        <taxon>Tetrahymena</taxon>
    </lineage>
</organism>
<name>MT1_TETPY</name>
<protein>
    <recommendedName>
        <fullName>Metallothionein-1</fullName>
        <shortName>MT-1</shortName>
    </recommendedName>
    <component>
        <recommendedName>
            <fullName>Metallothionein-2</fullName>
            <shortName>MT-2</shortName>
        </recommendedName>
    </component>
</protein>
<reference key="1">
    <citation type="journal article" date="1999" name="Gene">
        <title>Cadmium metallothionein gene of Tetrahymena pyriformis.</title>
        <authorList>
            <person name="Piccinni E."/>
            <person name="Bertaggia D."/>
            <person name="Santovito G."/>
            <person name="Miceli C."/>
            <person name="Kraev A."/>
        </authorList>
    </citation>
    <scope>NUCLEOTIDE SEQUENCE [GENOMIC DNA]</scope>
    <source>
        <strain>GL</strain>
    </source>
</reference>
<reference key="2">
    <citation type="journal article" date="1994" name="Eur. J. Biochem.">
        <title>Purification and primary structure of metallothioneins induced by cadmium in the protists Tetrahymena pigmentosa and Tetrahymena pyriformis.</title>
        <authorList>
            <person name="Piccinni E."/>
            <person name="Staudenmann W."/>
            <person name="Albergoni V."/>
            <person name="de Gabrieli R."/>
            <person name="James P."/>
        </authorList>
    </citation>
    <scope>PROTEIN SEQUENCE OF 3-107</scope>
</reference>
<sequence>MDKVNNNCCCGENAKPCCTDPNSGCCCVSETNNCCKSDKKECCTGTGEGCKCTGCKCCEPAKSGCCCGDKAKACCTDPNSGCCCSSKTNKCCDSTNKTECKTCECCK</sequence>
<proteinExistence type="evidence at protein level"/>